<keyword id="KW-0007">Acetylation</keyword>
<keyword id="KW-0131">Cell cycle</keyword>
<keyword id="KW-0175">Coiled coil</keyword>
<keyword id="KW-0963">Cytoplasm</keyword>
<keyword id="KW-0206">Cytoskeleton</keyword>
<keyword id="KW-0597">Phosphoprotein</keyword>
<keyword id="KW-1185">Reference proteome</keyword>
<keyword id="KW-0677">Repeat</keyword>
<proteinExistence type="evidence at protein level"/>
<feature type="chain" id="PRO_0000281911" description="Centrosomal protein POC5">
    <location>
        <begin position="1"/>
        <end position="558"/>
    </location>
</feature>
<feature type="repeat" description="Centrin-binding (CBR) 1">
    <location>
        <begin position="125"/>
        <end position="156"/>
    </location>
</feature>
<feature type="repeat" description="Centrin-binding (CBR) 2">
    <location>
        <begin position="214"/>
        <end position="245"/>
    </location>
</feature>
<feature type="repeat" description="Centrin-binding (CBR) 3">
    <location>
        <begin position="246"/>
        <end position="278"/>
    </location>
</feature>
<feature type="region of interest" description="Disordered" evidence="3">
    <location>
        <begin position="1"/>
        <end position="25"/>
    </location>
</feature>
<feature type="region of interest" description="Disordered" evidence="3">
    <location>
        <begin position="360"/>
        <end position="393"/>
    </location>
</feature>
<feature type="coiled-coil region" evidence="2">
    <location>
        <begin position="174"/>
        <end position="199"/>
    </location>
</feature>
<feature type="coiled-coil region" evidence="2">
    <location>
        <begin position="299"/>
        <end position="337"/>
    </location>
</feature>
<feature type="compositionally biased region" description="Basic and acidic residues" evidence="3">
    <location>
        <begin position="1"/>
        <end position="21"/>
    </location>
</feature>
<feature type="modified residue" description="Phosphothreonine" evidence="5">
    <location>
        <position position="23"/>
    </location>
</feature>
<feature type="modified residue" description="Phosphoserine" evidence="5">
    <location>
        <position position="80"/>
    </location>
</feature>
<feature type="modified residue" description="Phosphoserine" evidence="1">
    <location>
        <position position="92"/>
    </location>
</feature>
<feature type="modified residue" description="N6-acetyllysine" evidence="1">
    <location>
        <position position="521"/>
    </location>
</feature>
<feature type="modified residue" description="Phosphoserine" evidence="1">
    <location>
        <position position="547"/>
    </location>
</feature>
<accession>Q4V891</accession>
<dbReference type="EMBL" id="BC097489">
    <property type="protein sequence ID" value="AAH97489.1"/>
    <property type="molecule type" value="mRNA"/>
</dbReference>
<dbReference type="RefSeq" id="NP_001020818.1">
    <property type="nucleotide sequence ID" value="NM_001025647.1"/>
</dbReference>
<dbReference type="RefSeq" id="XP_006231883.1">
    <property type="nucleotide sequence ID" value="XM_006231821.2"/>
</dbReference>
<dbReference type="SMR" id="Q4V891"/>
<dbReference type="FunCoup" id="Q4V891">
    <property type="interactions" value="2610"/>
</dbReference>
<dbReference type="STRING" id="10116.ENSRNOP00000075735"/>
<dbReference type="iPTMnet" id="Q4V891"/>
<dbReference type="PhosphoSitePlus" id="Q4V891"/>
<dbReference type="PaxDb" id="10116-ENSRNOP00000058225"/>
<dbReference type="Ensembl" id="ENSRNOT00000087418.2">
    <property type="protein sequence ID" value="ENSRNOP00000070872.1"/>
    <property type="gene ID" value="ENSRNOG00000018193.8"/>
</dbReference>
<dbReference type="GeneID" id="294667"/>
<dbReference type="KEGG" id="rno:294667"/>
<dbReference type="UCSC" id="RGD:1310597">
    <property type="organism name" value="rat"/>
</dbReference>
<dbReference type="AGR" id="RGD:1310597"/>
<dbReference type="CTD" id="134359"/>
<dbReference type="RGD" id="1310597">
    <property type="gene designation" value="Poc5"/>
</dbReference>
<dbReference type="eggNOG" id="ENOG502QUKU">
    <property type="taxonomic scope" value="Eukaryota"/>
</dbReference>
<dbReference type="GeneTree" id="ENSGT00390000004454"/>
<dbReference type="InParanoid" id="Q4V891"/>
<dbReference type="OMA" id="KKVWKAW"/>
<dbReference type="OrthoDB" id="10064898at2759"/>
<dbReference type="PhylomeDB" id="Q4V891"/>
<dbReference type="PRO" id="PR:Q4V891"/>
<dbReference type="Proteomes" id="UP000002494">
    <property type="component" value="Chromosome 2"/>
</dbReference>
<dbReference type="Bgee" id="ENSRNOG00000018193">
    <property type="expression patterns" value="Expressed in testis and 19 other cell types or tissues"/>
</dbReference>
<dbReference type="ExpressionAtlas" id="Q4V891">
    <property type="expression patterns" value="baseline and differential"/>
</dbReference>
<dbReference type="GO" id="GO:0005814">
    <property type="term" value="C:centriole"/>
    <property type="evidence" value="ECO:0000250"/>
    <property type="project" value="UniProtKB"/>
</dbReference>
<dbReference type="GO" id="GO:0005813">
    <property type="term" value="C:centrosome"/>
    <property type="evidence" value="ECO:0000250"/>
    <property type="project" value="UniProtKB"/>
</dbReference>
<dbReference type="GO" id="GO:0005737">
    <property type="term" value="C:cytoplasm"/>
    <property type="evidence" value="ECO:0007669"/>
    <property type="project" value="UniProtKB-KW"/>
</dbReference>
<dbReference type="GO" id="GO:0032391">
    <property type="term" value="C:photoreceptor connecting cilium"/>
    <property type="evidence" value="ECO:0000318"/>
    <property type="project" value="GO_Central"/>
</dbReference>
<dbReference type="GO" id="GO:0061511">
    <property type="term" value="P:centriole elongation"/>
    <property type="evidence" value="ECO:0000250"/>
    <property type="project" value="UniProtKB"/>
</dbReference>
<dbReference type="GO" id="GO:0042462">
    <property type="term" value="P:eye photoreceptor cell development"/>
    <property type="evidence" value="ECO:0000318"/>
    <property type="project" value="GO_Central"/>
</dbReference>
<dbReference type="GO" id="GO:1903723">
    <property type="term" value="P:negative regulation of centriole elongation"/>
    <property type="evidence" value="ECO:0000250"/>
    <property type="project" value="UniProtKB"/>
</dbReference>
<dbReference type="InterPro" id="IPR033351">
    <property type="entry name" value="POC5"/>
</dbReference>
<dbReference type="PANTHER" id="PTHR28618">
    <property type="entry name" value="CENTROSOMAL PROTEIN POC5"/>
    <property type="match status" value="1"/>
</dbReference>
<dbReference type="PANTHER" id="PTHR28618:SF1">
    <property type="entry name" value="CENTROSOMAL PROTEIN POC5"/>
    <property type="match status" value="1"/>
</dbReference>
<comment type="function">
    <text evidence="1">Essential for the assembly of the distal half of centrioles, required for centriole elongation. Acts as a negative regulator of centriole elongation.</text>
</comment>
<comment type="subunit">
    <text evidence="1">Interacts with CETN2 and CETN3. Forms a microtubule-associated complex with POC1B, CETN2 and FAM161A. Interacts with CCDC15.</text>
</comment>
<comment type="subcellular location">
    <subcellularLocation>
        <location evidence="1">Cytoplasm</location>
        <location evidence="1">Cytoskeleton</location>
        <location evidence="1">Microtubule organizing center</location>
        <location evidence="1">Centrosome</location>
    </subcellularLocation>
    <subcellularLocation>
        <location evidence="1">Cytoplasm</location>
        <location evidence="1">Cytoskeleton</location>
        <location evidence="1">Microtubule organizing center</location>
        <location evidence="1">Centrosome</location>
        <location evidence="1">Centriole</location>
    </subcellularLocation>
    <text evidence="1">Localized to the distal portion of centrioles. Localizes to the inner scaffold in the central region of centrioles.</text>
</comment>
<comment type="PTM">
    <text evidence="1">Hyperphosphorylated during recruitment to procentrioles in G2/M phase.</text>
</comment>
<comment type="similarity">
    <text evidence="4">Belongs to the POC5 family.</text>
</comment>
<organism>
    <name type="scientific">Rattus norvegicus</name>
    <name type="common">Rat</name>
    <dbReference type="NCBI Taxonomy" id="10116"/>
    <lineage>
        <taxon>Eukaryota</taxon>
        <taxon>Metazoa</taxon>
        <taxon>Chordata</taxon>
        <taxon>Craniata</taxon>
        <taxon>Vertebrata</taxon>
        <taxon>Euteleostomi</taxon>
        <taxon>Mammalia</taxon>
        <taxon>Eutheria</taxon>
        <taxon>Euarchontoglires</taxon>
        <taxon>Glires</taxon>
        <taxon>Rodentia</taxon>
        <taxon>Myomorpha</taxon>
        <taxon>Muroidea</taxon>
        <taxon>Muridae</taxon>
        <taxon>Murinae</taxon>
        <taxon>Rattus</taxon>
    </lineage>
</organism>
<name>POC5_RAT</name>
<gene>
    <name type="primary">Poc5</name>
</gene>
<reference key="1">
    <citation type="journal article" date="2004" name="Genome Res.">
        <title>The status, quality, and expansion of the NIH full-length cDNA project: the Mammalian Gene Collection (MGC).</title>
        <authorList>
            <consortium name="The MGC Project Team"/>
        </authorList>
    </citation>
    <scope>NUCLEOTIDE SEQUENCE [LARGE SCALE MRNA]</scope>
    <source>
        <tissue>Placenta</tissue>
    </source>
</reference>
<reference key="2">
    <citation type="journal article" date="2012" name="Nat. Commun.">
        <title>Quantitative maps of protein phosphorylation sites across 14 different rat organs and tissues.</title>
        <authorList>
            <person name="Lundby A."/>
            <person name="Secher A."/>
            <person name="Lage K."/>
            <person name="Nordsborg N.B."/>
            <person name="Dmytriyev A."/>
            <person name="Lundby C."/>
            <person name="Olsen J.V."/>
        </authorList>
    </citation>
    <scope>PHOSPHORYLATION [LARGE SCALE ANALYSIS] AT THR-23 AND SER-80</scope>
    <scope>IDENTIFICATION BY MASS SPECTROMETRY [LARGE SCALE ANALYSIS]</scope>
</reference>
<sequence length="558" mass="60995">MSSDEDKCSLHVAHNDSDRSVSTDLQEEYEELLRYAVVNPNVESGVSRPSHLRGEAVPDRFPVLGSNPLRETALEVGKGSDLNISSLSKSGSPRKPPHPVMDFFGPHFLGDSSSPASISTRTDAHEIIVGDHLVSEENFQKLENVLDIWSSGLKTNILSELSKWRLNFIDWHRMEMKKEREKHAVTVKQLSSQIADLKELQKAFEISIGRKDEVISSLSRAIGKQKERIELMKSFFRWRIGHVKSRQESYEGKLADQYFERTLLKKVWKGWRSVVQRQWKDVVERACQARAEEVCVQISNDYEAKLAMLSLALENAKAEIQRMHQEKDHFEDSMKKAFMRGVCALNLEAMTIFQNKNDAGIDFTNNKKEESGPGGPGREPSAHLDTSSSTMPSAVPLQLLPSATLAAGVASATAIPSTASLTSAGATSASSGHVPISVLSAGSAATAAPEDTFAPRVVTAAQQKAGKTITARITGRCDFGSKTRINSSLAIMGVSPPMSSVVVEKHHPVTVQTIPQATAAKYPRAIHPESGFPASRSVGARPAHAQSLSNVQSIKVVD</sequence>
<evidence type="ECO:0000250" key="1">
    <source>
        <dbReference type="UniProtKB" id="Q8NA72"/>
    </source>
</evidence>
<evidence type="ECO:0000255" key="2"/>
<evidence type="ECO:0000256" key="3">
    <source>
        <dbReference type="SAM" id="MobiDB-lite"/>
    </source>
</evidence>
<evidence type="ECO:0000305" key="4"/>
<evidence type="ECO:0007744" key="5">
    <source>
    </source>
</evidence>
<protein>
    <recommendedName>
        <fullName>Centrosomal protein POC5</fullName>
    </recommendedName>
    <alternativeName>
        <fullName>Protein of centriole 5</fullName>
    </alternativeName>
</protein>